<protein>
    <recommendedName>
        <fullName evidence="1">Small ribosomal subunit protein bS18</fullName>
    </recommendedName>
    <alternativeName>
        <fullName evidence="2">30S ribosomal protein S18</fullName>
    </alternativeName>
</protein>
<dbReference type="EMBL" id="AL591973">
    <property type="protein sequence ID" value="CAC98261.1"/>
    <property type="molecule type" value="Genomic_DNA"/>
</dbReference>
<dbReference type="PIR" id="AG1080">
    <property type="entry name" value="AG1080"/>
</dbReference>
<dbReference type="RefSeq" id="NP_463579.1">
    <property type="nucleotide sequence ID" value="NC_003210.1"/>
</dbReference>
<dbReference type="RefSeq" id="WP_003721669.1">
    <property type="nucleotide sequence ID" value="NZ_CP149495.1"/>
</dbReference>
<dbReference type="PDB" id="7NHN">
    <property type="method" value="EM"/>
    <property type="resolution" value="2.90 A"/>
    <property type="chains" value="s=1-79"/>
</dbReference>
<dbReference type="PDBsum" id="7NHN"/>
<dbReference type="EMDB" id="EMD-12334"/>
<dbReference type="SMR" id="P66461"/>
<dbReference type="STRING" id="169963.gene:17592681"/>
<dbReference type="PaxDb" id="169963-lmo0046"/>
<dbReference type="EnsemblBacteria" id="CAC98261">
    <property type="protein sequence ID" value="CAC98261"/>
    <property type="gene ID" value="CAC98261"/>
</dbReference>
<dbReference type="GeneID" id="93237944"/>
<dbReference type="GeneID" id="985537"/>
<dbReference type="KEGG" id="lmo:lmo0046"/>
<dbReference type="PATRIC" id="fig|169963.11.peg.47"/>
<dbReference type="eggNOG" id="COG0238">
    <property type="taxonomic scope" value="Bacteria"/>
</dbReference>
<dbReference type="HOGENOM" id="CLU_148710_2_2_9"/>
<dbReference type="OrthoDB" id="9812008at2"/>
<dbReference type="PhylomeDB" id="P66461"/>
<dbReference type="BioCyc" id="LMON169963:LMO0046-MONOMER"/>
<dbReference type="Proteomes" id="UP000000817">
    <property type="component" value="Chromosome"/>
</dbReference>
<dbReference type="GO" id="GO:0022627">
    <property type="term" value="C:cytosolic small ribosomal subunit"/>
    <property type="evidence" value="ECO:0000318"/>
    <property type="project" value="GO_Central"/>
</dbReference>
<dbReference type="GO" id="GO:0070181">
    <property type="term" value="F:small ribosomal subunit rRNA binding"/>
    <property type="evidence" value="ECO:0000318"/>
    <property type="project" value="GO_Central"/>
</dbReference>
<dbReference type="GO" id="GO:0003735">
    <property type="term" value="F:structural constituent of ribosome"/>
    <property type="evidence" value="ECO:0000318"/>
    <property type="project" value="GO_Central"/>
</dbReference>
<dbReference type="GO" id="GO:0006412">
    <property type="term" value="P:translation"/>
    <property type="evidence" value="ECO:0000318"/>
    <property type="project" value="GO_Central"/>
</dbReference>
<dbReference type="FunFam" id="4.10.640.10:FF:000003">
    <property type="entry name" value="30S ribosomal protein S18"/>
    <property type="match status" value="1"/>
</dbReference>
<dbReference type="Gene3D" id="4.10.640.10">
    <property type="entry name" value="Ribosomal protein S18"/>
    <property type="match status" value="1"/>
</dbReference>
<dbReference type="HAMAP" id="MF_00270">
    <property type="entry name" value="Ribosomal_bS18"/>
    <property type="match status" value="1"/>
</dbReference>
<dbReference type="InterPro" id="IPR001648">
    <property type="entry name" value="Ribosomal_bS18"/>
</dbReference>
<dbReference type="InterPro" id="IPR018275">
    <property type="entry name" value="Ribosomal_bS18_CS"/>
</dbReference>
<dbReference type="InterPro" id="IPR036870">
    <property type="entry name" value="Ribosomal_bS18_sf"/>
</dbReference>
<dbReference type="NCBIfam" id="TIGR00165">
    <property type="entry name" value="S18"/>
    <property type="match status" value="1"/>
</dbReference>
<dbReference type="PANTHER" id="PTHR13479">
    <property type="entry name" value="30S RIBOSOMAL PROTEIN S18"/>
    <property type="match status" value="1"/>
</dbReference>
<dbReference type="PANTHER" id="PTHR13479:SF40">
    <property type="entry name" value="SMALL RIBOSOMAL SUBUNIT PROTEIN BS18M"/>
    <property type="match status" value="1"/>
</dbReference>
<dbReference type="Pfam" id="PF01084">
    <property type="entry name" value="Ribosomal_S18"/>
    <property type="match status" value="1"/>
</dbReference>
<dbReference type="PRINTS" id="PR00974">
    <property type="entry name" value="RIBOSOMALS18"/>
</dbReference>
<dbReference type="SUPFAM" id="SSF46911">
    <property type="entry name" value="Ribosomal protein S18"/>
    <property type="match status" value="1"/>
</dbReference>
<dbReference type="PROSITE" id="PS00057">
    <property type="entry name" value="RIBOSOMAL_S18"/>
    <property type="match status" value="1"/>
</dbReference>
<accession>P66461</accession>
<accession>Q92FR4</accession>
<evidence type="ECO:0000255" key="1">
    <source>
        <dbReference type="HAMAP-Rule" id="MF_00270"/>
    </source>
</evidence>
<evidence type="ECO:0000305" key="2"/>
<sequence length="79" mass="9098">MAGGRRGGRRRKKVCYFTSNGITHIDYKDVELLKKFVSERGKILPRRVTGTSAKYQRKLTVAIKRSRQMALLPFVAEEK</sequence>
<name>RS18_LISMO</name>
<comment type="function">
    <text evidence="1">Binds as a heterodimer with protein bS6 to the central domain of the 16S rRNA, where it helps stabilize the platform of the 30S subunit.</text>
</comment>
<comment type="subunit">
    <text evidence="1">Part of the 30S ribosomal subunit. Forms a tight heterodimer with protein bS6.</text>
</comment>
<comment type="similarity">
    <text evidence="1">Belongs to the bacterial ribosomal protein bS18 family.</text>
</comment>
<keyword id="KW-0002">3D-structure</keyword>
<keyword id="KW-1185">Reference proteome</keyword>
<keyword id="KW-0687">Ribonucleoprotein</keyword>
<keyword id="KW-0689">Ribosomal protein</keyword>
<keyword id="KW-0694">RNA-binding</keyword>
<keyword id="KW-0699">rRNA-binding</keyword>
<feature type="chain" id="PRO_0000111173" description="Small ribosomal subunit protein bS18">
    <location>
        <begin position="1"/>
        <end position="79"/>
    </location>
</feature>
<organism>
    <name type="scientific">Listeria monocytogenes serovar 1/2a (strain ATCC BAA-679 / EGD-e)</name>
    <dbReference type="NCBI Taxonomy" id="169963"/>
    <lineage>
        <taxon>Bacteria</taxon>
        <taxon>Bacillati</taxon>
        <taxon>Bacillota</taxon>
        <taxon>Bacilli</taxon>
        <taxon>Bacillales</taxon>
        <taxon>Listeriaceae</taxon>
        <taxon>Listeria</taxon>
    </lineage>
</organism>
<proteinExistence type="evidence at protein level"/>
<reference key="1">
    <citation type="journal article" date="2001" name="Science">
        <title>Comparative genomics of Listeria species.</title>
        <authorList>
            <person name="Glaser P."/>
            <person name="Frangeul L."/>
            <person name="Buchrieser C."/>
            <person name="Rusniok C."/>
            <person name="Amend A."/>
            <person name="Baquero F."/>
            <person name="Berche P."/>
            <person name="Bloecker H."/>
            <person name="Brandt P."/>
            <person name="Chakraborty T."/>
            <person name="Charbit A."/>
            <person name="Chetouani F."/>
            <person name="Couve E."/>
            <person name="de Daruvar A."/>
            <person name="Dehoux P."/>
            <person name="Domann E."/>
            <person name="Dominguez-Bernal G."/>
            <person name="Duchaud E."/>
            <person name="Durant L."/>
            <person name="Dussurget O."/>
            <person name="Entian K.-D."/>
            <person name="Fsihi H."/>
            <person name="Garcia-del Portillo F."/>
            <person name="Garrido P."/>
            <person name="Gautier L."/>
            <person name="Goebel W."/>
            <person name="Gomez-Lopez N."/>
            <person name="Hain T."/>
            <person name="Hauf J."/>
            <person name="Jackson D."/>
            <person name="Jones L.-M."/>
            <person name="Kaerst U."/>
            <person name="Kreft J."/>
            <person name="Kuhn M."/>
            <person name="Kunst F."/>
            <person name="Kurapkat G."/>
            <person name="Madueno E."/>
            <person name="Maitournam A."/>
            <person name="Mata Vicente J."/>
            <person name="Ng E."/>
            <person name="Nedjari H."/>
            <person name="Nordsiek G."/>
            <person name="Novella S."/>
            <person name="de Pablos B."/>
            <person name="Perez-Diaz J.-C."/>
            <person name="Purcell R."/>
            <person name="Remmel B."/>
            <person name="Rose M."/>
            <person name="Schlueter T."/>
            <person name="Simoes N."/>
            <person name="Tierrez A."/>
            <person name="Vazquez-Boland J.-A."/>
            <person name="Voss H."/>
            <person name="Wehland J."/>
            <person name="Cossart P."/>
        </authorList>
    </citation>
    <scope>NUCLEOTIDE SEQUENCE [LARGE SCALE GENOMIC DNA]</scope>
    <source>
        <strain>ATCC BAA-679 / EGD-e</strain>
    </source>
</reference>
<gene>
    <name evidence="1" type="primary">rpsR</name>
    <name type="ordered locus">lmo0046</name>
</gene>